<name>TUSA_PSET1</name>
<comment type="function">
    <text evidence="1">Sulfur carrier protein which probably makes part of a sulfur-relay system.</text>
</comment>
<comment type="subcellular location">
    <subcellularLocation>
        <location evidence="1">Cytoplasm</location>
    </subcellularLocation>
</comment>
<comment type="similarity">
    <text evidence="1">Belongs to the sulfur carrier protein TusA family.</text>
</comment>
<accession>Q3IJ25</accession>
<proteinExistence type="inferred from homology"/>
<dbReference type="EMBL" id="CR954246">
    <property type="protein sequence ID" value="CAI85123.1"/>
    <property type="molecule type" value="Genomic_DNA"/>
</dbReference>
<dbReference type="SMR" id="Q3IJ25"/>
<dbReference type="STRING" id="326442.PSHAa0009"/>
<dbReference type="KEGG" id="pha:PSHAa0009"/>
<dbReference type="PATRIC" id="fig|326442.8.peg.10"/>
<dbReference type="eggNOG" id="COG0425">
    <property type="taxonomic scope" value="Bacteria"/>
</dbReference>
<dbReference type="HOGENOM" id="CLU_165255_5_1_6"/>
<dbReference type="BioCyc" id="PHAL326442:PSHA_RS00045-MONOMER"/>
<dbReference type="Proteomes" id="UP000006843">
    <property type="component" value="Chromosome I"/>
</dbReference>
<dbReference type="GO" id="GO:0005737">
    <property type="term" value="C:cytoplasm"/>
    <property type="evidence" value="ECO:0007669"/>
    <property type="project" value="UniProtKB-SubCell"/>
</dbReference>
<dbReference type="GO" id="GO:0097163">
    <property type="term" value="F:sulfur carrier activity"/>
    <property type="evidence" value="ECO:0007669"/>
    <property type="project" value="UniProtKB-UniRule"/>
</dbReference>
<dbReference type="GO" id="GO:0002143">
    <property type="term" value="P:tRNA wobble position uridine thiolation"/>
    <property type="evidence" value="ECO:0007669"/>
    <property type="project" value="InterPro"/>
</dbReference>
<dbReference type="CDD" id="cd03423">
    <property type="entry name" value="SirA"/>
    <property type="match status" value="1"/>
</dbReference>
<dbReference type="Gene3D" id="3.30.110.40">
    <property type="entry name" value="TusA-like domain"/>
    <property type="match status" value="1"/>
</dbReference>
<dbReference type="HAMAP" id="MF_00413">
    <property type="entry name" value="Thiourid_synth_A"/>
    <property type="match status" value="1"/>
</dbReference>
<dbReference type="InterPro" id="IPR022931">
    <property type="entry name" value="Sulphur_carrier_TusA"/>
</dbReference>
<dbReference type="InterPro" id="IPR001455">
    <property type="entry name" value="TusA-like"/>
</dbReference>
<dbReference type="InterPro" id="IPR036868">
    <property type="entry name" value="TusA-like_sf"/>
</dbReference>
<dbReference type="NCBIfam" id="NF001423">
    <property type="entry name" value="PRK00299.1"/>
    <property type="match status" value="1"/>
</dbReference>
<dbReference type="PANTHER" id="PTHR33279:SF2">
    <property type="entry name" value="SULFUR CARRIER PROTEIN TUSA"/>
    <property type="match status" value="1"/>
</dbReference>
<dbReference type="PANTHER" id="PTHR33279">
    <property type="entry name" value="SULFUR CARRIER PROTEIN YEDF-RELATED"/>
    <property type="match status" value="1"/>
</dbReference>
<dbReference type="Pfam" id="PF01206">
    <property type="entry name" value="TusA"/>
    <property type="match status" value="1"/>
</dbReference>
<dbReference type="SUPFAM" id="SSF64307">
    <property type="entry name" value="SirA-like"/>
    <property type="match status" value="1"/>
</dbReference>
<dbReference type="PROSITE" id="PS01148">
    <property type="entry name" value="UPF0033"/>
    <property type="match status" value="1"/>
</dbReference>
<reference key="1">
    <citation type="journal article" date="2005" name="Genome Res.">
        <title>Coping with cold: the genome of the versatile marine Antarctica bacterium Pseudoalteromonas haloplanktis TAC125.</title>
        <authorList>
            <person name="Medigue C."/>
            <person name="Krin E."/>
            <person name="Pascal G."/>
            <person name="Barbe V."/>
            <person name="Bernsel A."/>
            <person name="Bertin P.N."/>
            <person name="Cheung F."/>
            <person name="Cruveiller S."/>
            <person name="D'Amico S."/>
            <person name="Duilio A."/>
            <person name="Fang G."/>
            <person name="Feller G."/>
            <person name="Ho C."/>
            <person name="Mangenot S."/>
            <person name="Marino G."/>
            <person name="Nilsson J."/>
            <person name="Parrilli E."/>
            <person name="Rocha E.P.C."/>
            <person name="Rouy Z."/>
            <person name="Sekowska A."/>
            <person name="Tutino M.L."/>
            <person name="Vallenet D."/>
            <person name="von Heijne G."/>
            <person name="Danchin A."/>
        </authorList>
    </citation>
    <scope>NUCLEOTIDE SEQUENCE [LARGE SCALE GENOMIC DNA]</scope>
    <source>
        <strain>TAC 125</strain>
    </source>
</reference>
<gene>
    <name evidence="1" type="primary">tusA</name>
    <name type="ordered locus">PSHAa0009</name>
</gene>
<organism>
    <name type="scientific">Pseudoalteromonas translucida (strain TAC 125)</name>
    <dbReference type="NCBI Taxonomy" id="326442"/>
    <lineage>
        <taxon>Bacteria</taxon>
        <taxon>Pseudomonadati</taxon>
        <taxon>Pseudomonadota</taxon>
        <taxon>Gammaproteobacteria</taxon>
        <taxon>Alteromonadales</taxon>
        <taxon>Pseudoalteromonadaceae</taxon>
        <taxon>Pseudoalteromonas</taxon>
    </lineage>
</organism>
<feature type="chain" id="PRO_0000234120" description="Sulfur carrier protein TusA">
    <location>
        <begin position="1"/>
        <end position="79"/>
    </location>
</feature>
<feature type="active site" description="Cysteine persulfide intermediate" evidence="1">
    <location>
        <position position="17"/>
    </location>
</feature>
<keyword id="KW-0963">Cytoplasm</keyword>
<keyword id="KW-1185">Reference proteome</keyword>
<evidence type="ECO:0000255" key="1">
    <source>
        <dbReference type="HAMAP-Rule" id="MF_00413"/>
    </source>
</evidence>
<protein>
    <recommendedName>
        <fullName evidence="1">Sulfur carrier protein TusA</fullName>
    </recommendedName>
</protein>
<sequence>MSFNNPDHQLDAIGLRCPEPVMMVRAAIRKMNDGETLLIIADDPSTTRDIPSFCTFMDHTLVAKDAEQAPYRYVVKKGL</sequence>